<reference key="1">
    <citation type="journal article" date="2004" name="J. Mol. Microbiol. Biotechnol.">
        <title>The complete genome sequence of Bacillus licheniformis DSM13, an organism with great industrial potential.</title>
        <authorList>
            <person name="Veith B."/>
            <person name="Herzberg C."/>
            <person name="Steckel S."/>
            <person name="Feesche J."/>
            <person name="Maurer K.H."/>
            <person name="Ehrenreich P."/>
            <person name="Baeumer S."/>
            <person name="Henne A."/>
            <person name="Liesegang H."/>
            <person name="Merkl R."/>
            <person name="Ehrenreich A."/>
            <person name="Gottschalk G."/>
        </authorList>
    </citation>
    <scope>NUCLEOTIDE SEQUENCE [LARGE SCALE GENOMIC DNA]</scope>
    <source>
        <strain>ATCC 14580 / DSM 13 / JCM 2505 / CCUG 7422 / NBRC 12200 / NCIMB 9375 / NCTC 10341 / NRRL NRS-1264 / Gibson 46</strain>
    </source>
</reference>
<reference key="2">
    <citation type="journal article" date="2004" name="Genome Biol.">
        <title>Complete genome sequence of the industrial bacterium Bacillus licheniformis and comparisons with closely related Bacillus species.</title>
        <authorList>
            <person name="Rey M.W."/>
            <person name="Ramaiya P."/>
            <person name="Nelson B.A."/>
            <person name="Brody-Karpin S.D."/>
            <person name="Zaretsky E.J."/>
            <person name="Tang M."/>
            <person name="Lopez de Leon A."/>
            <person name="Xiang H."/>
            <person name="Gusti V."/>
            <person name="Clausen I.G."/>
            <person name="Olsen P.B."/>
            <person name="Rasmussen M.D."/>
            <person name="Andersen J.T."/>
            <person name="Joergensen P.L."/>
            <person name="Larsen T.S."/>
            <person name="Sorokin A."/>
            <person name="Bolotin A."/>
            <person name="Lapidus A."/>
            <person name="Galleron N."/>
            <person name="Ehrlich S.D."/>
            <person name="Berka R.M."/>
        </authorList>
    </citation>
    <scope>NUCLEOTIDE SEQUENCE [LARGE SCALE GENOMIC DNA]</scope>
    <source>
        <strain>ATCC 14580 / DSM 13 / JCM 2505 / CCUG 7422 / NBRC 12200 / NCIMB 9375 / NCTC 10341 / NRRL NRS-1264 / Gibson 46</strain>
    </source>
</reference>
<proteinExistence type="inferred from homology"/>
<evidence type="ECO:0000255" key="1">
    <source>
        <dbReference type="HAMAP-Rule" id="MF_01229"/>
    </source>
</evidence>
<keyword id="KW-0285">Flavoprotein</keyword>
<keyword id="KW-0288">FMN</keyword>
<keyword id="KW-0503">Monooxygenase</keyword>
<keyword id="KW-0560">Oxidoreductase</keyword>
<keyword id="KW-1185">Reference proteome</keyword>
<name>SSUD_BACLD</name>
<gene>
    <name evidence="1" type="primary">ssuD</name>
    <name type="ordered locus">BLi00944</name>
    <name type="ordered locus">BL05083</name>
</gene>
<comment type="function">
    <text evidence="1">Catalyzes the desulfonation of aliphatic sulfonates.</text>
</comment>
<comment type="catalytic activity">
    <reaction evidence="1">
        <text>an alkanesulfonate + FMNH2 + O2 = an aldehyde + FMN + sulfite + H2O + 2 H(+)</text>
        <dbReference type="Rhea" id="RHEA:23064"/>
        <dbReference type="ChEBI" id="CHEBI:15377"/>
        <dbReference type="ChEBI" id="CHEBI:15378"/>
        <dbReference type="ChEBI" id="CHEBI:15379"/>
        <dbReference type="ChEBI" id="CHEBI:17359"/>
        <dbReference type="ChEBI" id="CHEBI:17478"/>
        <dbReference type="ChEBI" id="CHEBI:57618"/>
        <dbReference type="ChEBI" id="CHEBI:58210"/>
        <dbReference type="ChEBI" id="CHEBI:134249"/>
        <dbReference type="EC" id="1.14.14.5"/>
    </reaction>
</comment>
<comment type="similarity">
    <text evidence="1">Belongs to the SsuD family.</text>
</comment>
<accession>Q65M61</accession>
<accession>Q62XK1</accession>
<dbReference type="EC" id="1.14.14.5" evidence="1"/>
<dbReference type="EMBL" id="CP000002">
    <property type="protein sequence ID" value="AAU22507.2"/>
    <property type="molecule type" value="Genomic_DNA"/>
</dbReference>
<dbReference type="EMBL" id="AE017333">
    <property type="protein sequence ID" value="AAU39853.1"/>
    <property type="molecule type" value="Genomic_DNA"/>
</dbReference>
<dbReference type="RefSeq" id="WP_003179995.1">
    <property type="nucleotide sequence ID" value="NC_006322.1"/>
</dbReference>
<dbReference type="SMR" id="Q65M61"/>
<dbReference type="STRING" id="279010.BL05083"/>
<dbReference type="GeneID" id="92862479"/>
<dbReference type="KEGG" id="bld:BLi00944"/>
<dbReference type="KEGG" id="bli:BL05083"/>
<dbReference type="PATRIC" id="fig|279010.13.peg.917"/>
<dbReference type="eggNOG" id="COG2141">
    <property type="taxonomic scope" value="Bacteria"/>
</dbReference>
<dbReference type="HOGENOM" id="CLU_027853_1_0_9"/>
<dbReference type="Proteomes" id="UP000000606">
    <property type="component" value="Chromosome"/>
</dbReference>
<dbReference type="GO" id="GO:0008726">
    <property type="term" value="F:alkanesulfonate monooxygenase activity"/>
    <property type="evidence" value="ECO:0007669"/>
    <property type="project" value="UniProtKB-UniRule"/>
</dbReference>
<dbReference type="GO" id="GO:0046306">
    <property type="term" value="P:alkanesulfonate catabolic process"/>
    <property type="evidence" value="ECO:0007669"/>
    <property type="project" value="TreeGrafter"/>
</dbReference>
<dbReference type="CDD" id="cd01094">
    <property type="entry name" value="Alkanesulfonate_monoxygenase"/>
    <property type="match status" value="1"/>
</dbReference>
<dbReference type="Gene3D" id="3.20.20.30">
    <property type="entry name" value="Luciferase-like domain"/>
    <property type="match status" value="1"/>
</dbReference>
<dbReference type="HAMAP" id="MF_01229">
    <property type="entry name" value="Alkanesulf_monooxygen"/>
    <property type="match status" value="1"/>
</dbReference>
<dbReference type="InterPro" id="IPR019911">
    <property type="entry name" value="Alkanesulphonate_mOase_FMN-dep"/>
</dbReference>
<dbReference type="InterPro" id="IPR011251">
    <property type="entry name" value="Luciferase-like_dom"/>
</dbReference>
<dbReference type="InterPro" id="IPR036661">
    <property type="entry name" value="Luciferase-like_sf"/>
</dbReference>
<dbReference type="InterPro" id="IPR050172">
    <property type="entry name" value="SsuD_RutA_monooxygenase"/>
</dbReference>
<dbReference type="NCBIfam" id="TIGR03565">
    <property type="entry name" value="alk_sulf_monoox"/>
    <property type="match status" value="1"/>
</dbReference>
<dbReference type="NCBIfam" id="NF001939">
    <property type="entry name" value="PRK00719.1"/>
    <property type="match status" value="1"/>
</dbReference>
<dbReference type="PANTHER" id="PTHR42847">
    <property type="entry name" value="ALKANESULFONATE MONOOXYGENASE"/>
    <property type="match status" value="1"/>
</dbReference>
<dbReference type="PANTHER" id="PTHR42847:SF4">
    <property type="entry name" value="ALKANESULFONATE MONOOXYGENASE-RELATED"/>
    <property type="match status" value="1"/>
</dbReference>
<dbReference type="Pfam" id="PF00296">
    <property type="entry name" value="Bac_luciferase"/>
    <property type="match status" value="1"/>
</dbReference>
<dbReference type="SUPFAM" id="SSF51679">
    <property type="entry name" value="Bacterial luciferase-like"/>
    <property type="match status" value="1"/>
</dbReference>
<organism>
    <name type="scientific">Bacillus licheniformis (strain ATCC 14580 / DSM 13 / JCM 2505 / CCUG 7422 / NBRC 12200 / NCIMB 9375 / NCTC 10341 / NRRL NRS-1264 / Gibson 46)</name>
    <dbReference type="NCBI Taxonomy" id="279010"/>
    <lineage>
        <taxon>Bacteria</taxon>
        <taxon>Bacillati</taxon>
        <taxon>Bacillota</taxon>
        <taxon>Bacilli</taxon>
        <taxon>Bacillales</taxon>
        <taxon>Bacillaceae</taxon>
        <taxon>Bacillus</taxon>
    </lineage>
</organism>
<feature type="chain" id="PRO_1000066817" description="Alkanesulfonate monooxygenase">
    <location>
        <begin position="1"/>
        <end position="376"/>
    </location>
</feature>
<protein>
    <recommendedName>
        <fullName evidence="1">Alkanesulfonate monooxygenase</fullName>
        <ecNumber evidence="1">1.14.14.5</ecNumber>
    </recommendedName>
    <alternativeName>
        <fullName evidence="1">FMNH2-dependent aliphatic sulfonate monooxygenase</fullName>
    </alternativeName>
</protein>
<sequence>MDILWFIPTHGDGRYLGTNTGGRAADHTYFQQVAQAADRLGYTGVLLPTGRSCEDPWITAAALASVTKNLKFLVAVRPGLMQPSVAARMASTFDRLAEGRLLINVVAGGDPYELAGDGLFISHDERYEATNEFLDIWRSLLKGETVSYSGKHLKTENGRLLFPPAQQPHPPIYFGGSSKAGQETAAKHADVYLTWGEPPHLVKEKIQSVKKKAEKEGRTVRFGIRLHVIVRETEKEAWQAADRLISRLEDETIAAAQNAMKRMDSSGQKRMVQLHQGNRSNLEISPNLWAGIGLVRGGAGTALVGDPETVASRIKEYADIGIESFIFSGYPHLEEAYHFAEKVFPLLPFRTKLQSKASGEVIGNDHFPSRQKEKTV</sequence>